<proteinExistence type="inferred from homology"/>
<comment type="function">
    <text evidence="1">ATP-dependent carboxylate-amine ligase which exhibits weak glutamate--cysteine ligase activity.</text>
</comment>
<comment type="catalytic activity">
    <reaction evidence="1">
        <text>L-cysteine + L-glutamate + ATP = gamma-L-glutamyl-L-cysteine + ADP + phosphate + H(+)</text>
        <dbReference type="Rhea" id="RHEA:13285"/>
        <dbReference type="ChEBI" id="CHEBI:15378"/>
        <dbReference type="ChEBI" id="CHEBI:29985"/>
        <dbReference type="ChEBI" id="CHEBI:30616"/>
        <dbReference type="ChEBI" id="CHEBI:35235"/>
        <dbReference type="ChEBI" id="CHEBI:43474"/>
        <dbReference type="ChEBI" id="CHEBI:58173"/>
        <dbReference type="ChEBI" id="CHEBI:456216"/>
        <dbReference type="EC" id="6.3.2.2"/>
    </reaction>
</comment>
<comment type="subunit">
    <text evidence="1">Homodimer.</text>
</comment>
<comment type="similarity">
    <text evidence="1">Belongs to the glutamate--cysteine ligase type 2 family. YbdK subfamily.</text>
</comment>
<organism>
    <name type="scientific">Escherichia coli O6:H1 (strain CFT073 / ATCC 700928 / UPEC)</name>
    <dbReference type="NCBI Taxonomy" id="199310"/>
    <lineage>
        <taxon>Bacteria</taxon>
        <taxon>Pseudomonadati</taxon>
        <taxon>Pseudomonadota</taxon>
        <taxon>Gammaproteobacteria</taxon>
        <taxon>Enterobacterales</taxon>
        <taxon>Enterobacteriaceae</taxon>
        <taxon>Escherichia</taxon>
    </lineage>
</organism>
<name>GCS2_ECOL6</name>
<sequence length="372" mass="41647">MPLPDFHVSEPFTLGIELEMQVVNPPGYDLSQDSSMLIDAVKNKITAGEVKHDITESMLELATDVCRDINQAAGQFSAMQKVVLQAAADHHLEICGGGTHPFQKWQRQEVCDNERYQRTLQNFGYLIQQATVFGQHVHVGCASGDDAIYLLHGLSRFVPHFIALSAASPYMQGTDTRFASSRPNIFSAFPDNGPMPWVSNWQQFEALFRCLSYTTMIDSIKDLHWDIRPSPHFGTVEVRVMDTPLTLSHAVNMAGLIQATAHWLLTERPFKHQEKDYLLYKFNRFQACRYGLEGVITDPHTGDRRSLTEATLRLLEKITPSAHKIGASSAIEALHRQVVSGLNEAQLMRDFVADGGSLIGLVKKHCEIWAGE</sequence>
<keyword id="KW-0067">ATP-binding</keyword>
<keyword id="KW-0436">Ligase</keyword>
<keyword id="KW-0547">Nucleotide-binding</keyword>
<keyword id="KW-1185">Reference proteome</keyword>
<accession>Q8FK30</accession>
<dbReference type="EC" id="6.3.2.2" evidence="1"/>
<dbReference type="EMBL" id="AE014075">
    <property type="protein sequence ID" value="AAN79142.1"/>
    <property type="molecule type" value="Genomic_DNA"/>
</dbReference>
<dbReference type="RefSeq" id="WP_001130647.1">
    <property type="nucleotide sequence ID" value="NZ_CP051263.1"/>
</dbReference>
<dbReference type="SMR" id="Q8FK30"/>
<dbReference type="STRING" id="199310.c0667"/>
<dbReference type="KEGG" id="ecc:c0667"/>
<dbReference type="eggNOG" id="COG2170">
    <property type="taxonomic scope" value="Bacteria"/>
</dbReference>
<dbReference type="HOGENOM" id="CLU_044848_1_1_6"/>
<dbReference type="BioCyc" id="ECOL199310:C0667-MONOMER"/>
<dbReference type="Proteomes" id="UP000001410">
    <property type="component" value="Chromosome"/>
</dbReference>
<dbReference type="GO" id="GO:0005524">
    <property type="term" value="F:ATP binding"/>
    <property type="evidence" value="ECO:0007669"/>
    <property type="project" value="UniProtKB-KW"/>
</dbReference>
<dbReference type="GO" id="GO:0004357">
    <property type="term" value="F:glutamate-cysteine ligase activity"/>
    <property type="evidence" value="ECO:0007669"/>
    <property type="project" value="UniProtKB-EC"/>
</dbReference>
<dbReference type="GO" id="GO:0042398">
    <property type="term" value="P:modified amino acid biosynthetic process"/>
    <property type="evidence" value="ECO:0007669"/>
    <property type="project" value="InterPro"/>
</dbReference>
<dbReference type="FunFam" id="3.30.590.20:FF:000002">
    <property type="entry name" value="Putative glutamate--cysteine ligase 2"/>
    <property type="match status" value="1"/>
</dbReference>
<dbReference type="Gene3D" id="3.30.590.20">
    <property type="match status" value="1"/>
</dbReference>
<dbReference type="HAMAP" id="MF_01609">
    <property type="entry name" value="Glu_cys_ligase_2"/>
    <property type="match status" value="1"/>
</dbReference>
<dbReference type="InterPro" id="IPR050141">
    <property type="entry name" value="GCL_type2/YbdK_subfam"/>
</dbReference>
<dbReference type="InterPro" id="IPR006336">
    <property type="entry name" value="GCS2"/>
</dbReference>
<dbReference type="InterPro" id="IPR014746">
    <property type="entry name" value="Gln_synth/guanido_kin_cat_dom"/>
</dbReference>
<dbReference type="InterPro" id="IPR011793">
    <property type="entry name" value="YbdK"/>
</dbReference>
<dbReference type="NCBIfam" id="TIGR02050">
    <property type="entry name" value="gshA_cyan_rel"/>
    <property type="match status" value="1"/>
</dbReference>
<dbReference type="NCBIfam" id="NF010040">
    <property type="entry name" value="PRK13516.1"/>
    <property type="match status" value="1"/>
</dbReference>
<dbReference type="PANTHER" id="PTHR36510">
    <property type="entry name" value="GLUTAMATE--CYSTEINE LIGASE 2-RELATED"/>
    <property type="match status" value="1"/>
</dbReference>
<dbReference type="PANTHER" id="PTHR36510:SF1">
    <property type="entry name" value="GLUTAMATE--CYSTEINE LIGASE 2-RELATED"/>
    <property type="match status" value="1"/>
</dbReference>
<dbReference type="Pfam" id="PF04107">
    <property type="entry name" value="GCS2"/>
    <property type="match status" value="1"/>
</dbReference>
<dbReference type="SUPFAM" id="SSF55931">
    <property type="entry name" value="Glutamine synthetase/guanido kinase"/>
    <property type="match status" value="1"/>
</dbReference>
<protein>
    <recommendedName>
        <fullName evidence="1">Putative glutamate--cysteine ligase 2</fullName>
        <ecNumber evidence="1">6.3.2.2</ecNumber>
    </recommendedName>
    <alternativeName>
        <fullName evidence="1">Gamma-glutamylcysteine synthetase 2</fullName>
        <shortName evidence="1">GCS 2</shortName>
        <shortName evidence="1">Gamma-GCS 2</shortName>
    </alternativeName>
</protein>
<evidence type="ECO:0000255" key="1">
    <source>
        <dbReference type="HAMAP-Rule" id="MF_01609"/>
    </source>
</evidence>
<feature type="chain" id="PRO_0000218198" description="Putative glutamate--cysteine ligase 2">
    <location>
        <begin position="1"/>
        <end position="372"/>
    </location>
</feature>
<gene>
    <name type="primary">ybdK</name>
    <name type="ordered locus">c0667</name>
</gene>
<reference key="1">
    <citation type="journal article" date="2002" name="Proc. Natl. Acad. Sci. U.S.A.">
        <title>Extensive mosaic structure revealed by the complete genome sequence of uropathogenic Escherichia coli.</title>
        <authorList>
            <person name="Welch R.A."/>
            <person name="Burland V."/>
            <person name="Plunkett G. III"/>
            <person name="Redford P."/>
            <person name="Roesch P."/>
            <person name="Rasko D."/>
            <person name="Buckles E.L."/>
            <person name="Liou S.-R."/>
            <person name="Boutin A."/>
            <person name="Hackett J."/>
            <person name="Stroud D."/>
            <person name="Mayhew G.F."/>
            <person name="Rose D.J."/>
            <person name="Zhou S."/>
            <person name="Schwartz D.C."/>
            <person name="Perna N.T."/>
            <person name="Mobley H.L.T."/>
            <person name="Donnenberg M.S."/>
            <person name="Blattner F.R."/>
        </authorList>
    </citation>
    <scope>NUCLEOTIDE SEQUENCE [LARGE SCALE GENOMIC DNA]</scope>
    <source>
        <strain>CFT073 / ATCC 700928 / UPEC</strain>
    </source>
</reference>